<gene>
    <name type="primary">yqiA</name>
    <name type="ordered locus">SF3071</name>
    <name type="ordered locus">S3276</name>
</gene>
<sequence>MSTLLYLHGFNSSPRSAKASLLKNWLAEHHPDVEMIIPQLPPYPSDAAELLESIVLEHGGDSLGIVGSSLGGYYATWLSQCFMLPAVVVNPAVRPFELLTDYLGQNENPYTGQQYVLESRHIYDLKVMQIDPLEAPDLIWLLQQTGDEVLDYRQAVAYYASCRQTVIEGGNHAFTGFEDYFNPIVDFLGLHHL</sequence>
<protein>
    <recommendedName>
        <fullName>Esterase YqiA</fullName>
        <ecNumber>3.1.-.-</ecNumber>
    </recommendedName>
</protein>
<reference key="1">
    <citation type="journal article" date="2002" name="Nucleic Acids Res.">
        <title>Genome sequence of Shigella flexneri 2a: insights into pathogenicity through comparison with genomes of Escherichia coli K12 and O157.</title>
        <authorList>
            <person name="Jin Q."/>
            <person name="Yuan Z."/>
            <person name="Xu J."/>
            <person name="Wang Y."/>
            <person name="Shen Y."/>
            <person name="Lu W."/>
            <person name="Wang J."/>
            <person name="Liu H."/>
            <person name="Yang J."/>
            <person name="Yang F."/>
            <person name="Zhang X."/>
            <person name="Zhang J."/>
            <person name="Yang G."/>
            <person name="Wu H."/>
            <person name="Qu D."/>
            <person name="Dong J."/>
            <person name="Sun L."/>
            <person name="Xue Y."/>
            <person name="Zhao A."/>
            <person name="Gao Y."/>
            <person name="Zhu J."/>
            <person name="Kan B."/>
            <person name="Ding K."/>
            <person name="Chen S."/>
            <person name="Cheng H."/>
            <person name="Yao Z."/>
            <person name="He B."/>
            <person name="Chen R."/>
            <person name="Ma D."/>
            <person name="Qiang B."/>
            <person name="Wen Y."/>
            <person name="Hou Y."/>
            <person name="Yu J."/>
        </authorList>
    </citation>
    <scope>NUCLEOTIDE SEQUENCE [LARGE SCALE GENOMIC DNA]</scope>
    <source>
        <strain>301 / Serotype 2a</strain>
    </source>
</reference>
<reference key="2">
    <citation type="journal article" date="2003" name="Infect. Immun.">
        <title>Complete genome sequence and comparative genomics of Shigella flexneri serotype 2a strain 2457T.</title>
        <authorList>
            <person name="Wei J."/>
            <person name="Goldberg M.B."/>
            <person name="Burland V."/>
            <person name="Venkatesan M.M."/>
            <person name="Deng W."/>
            <person name="Fournier G."/>
            <person name="Mayhew G.F."/>
            <person name="Plunkett G. III"/>
            <person name="Rose D.J."/>
            <person name="Darling A."/>
            <person name="Mau B."/>
            <person name="Perna N.T."/>
            <person name="Payne S.M."/>
            <person name="Runyen-Janecky L.J."/>
            <person name="Zhou S."/>
            <person name="Schwartz D.C."/>
            <person name="Blattner F.R."/>
        </authorList>
    </citation>
    <scope>NUCLEOTIDE SEQUENCE [LARGE SCALE GENOMIC DNA]</scope>
    <source>
        <strain>ATCC 700930 / 2457T / Serotype 2a</strain>
    </source>
</reference>
<keyword id="KW-0378">Hydrolase</keyword>
<keyword id="KW-1185">Reference proteome</keyword>
<keyword id="KW-0719">Serine esterase</keyword>
<comment type="function">
    <text evidence="1">Displays esterase activity toward palmitoyl-CoA and pNP-butyrate.</text>
</comment>
<organism>
    <name type="scientific">Shigella flexneri</name>
    <dbReference type="NCBI Taxonomy" id="623"/>
    <lineage>
        <taxon>Bacteria</taxon>
        <taxon>Pseudomonadati</taxon>
        <taxon>Pseudomonadota</taxon>
        <taxon>Gammaproteobacteria</taxon>
        <taxon>Enterobacterales</taxon>
        <taxon>Enterobacteriaceae</taxon>
        <taxon>Shigella</taxon>
    </lineage>
</organism>
<evidence type="ECO:0000250" key="1"/>
<feature type="chain" id="PRO_0000066447" description="Esterase YqiA">
    <location>
        <begin position="1"/>
        <end position="193"/>
    </location>
</feature>
<dbReference type="EC" id="3.1.-.-"/>
<dbReference type="EMBL" id="AE005674">
    <property type="protein sequence ID" value="AAN44549.1"/>
    <property type="molecule type" value="Genomic_DNA"/>
</dbReference>
<dbReference type="EMBL" id="AE014073">
    <property type="protein sequence ID" value="AAP18362.1"/>
    <property type="molecule type" value="Genomic_DNA"/>
</dbReference>
<dbReference type="RefSeq" id="NP_708842.1">
    <property type="nucleotide sequence ID" value="NC_004337.2"/>
</dbReference>
<dbReference type="RefSeq" id="WP_000105733.1">
    <property type="nucleotide sequence ID" value="NZ_WPGW01000100.1"/>
</dbReference>
<dbReference type="SMR" id="P0A900"/>
<dbReference type="STRING" id="198214.SF3071"/>
<dbReference type="ESTHER" id="ecoli-yqia">
    <property type="family name" value="abh_upf00227"/>
</dbReference>
<dbReference type="PaxDb" id="198214-SF3071"/>
<dbReference type="GeneID" id="1026678"/>
<dbReference type="GeneID" id="93778962"/>
<dbReference type="KEGG" id="sfl:SF3071"/>
<dbReference type="KEGG" id="sfx:S3276"/>
<dbReference type="PATRIC" id="fig|198214.7.peg.3646"/>
<dbReference type="HOGENOM" id="CLU_090996_2_0_6"/>
<dbReference type="Proteomes" id="UP000001006">
    <property type="component" value="Chromosome"/>
</dbReference>
<dbReference type="Proteomes" id="UP000002673">
    <property type="component" value="Chromosome"/>
</dbReference>
<dbReference type="GO" id="GO:0052689">
    <property type="term" value="F:carboxylic ester hydrolase activity"/>
    <property type="evidence" value="ECO:0007669"/>
    <property type="project" value="UniProtKB-KW"/>
</dbReference>
<dbReference type="FunFam" id="3.40.50.1820:FF:000027">
    <property type="entry name" value="Esterase YqiA"/>
    <property type="match status" value="1"/>
</dbReference>
<dbReference type="Gene3D" id="3.40.50.1820">
    <property type="entry name" value="alpha/beta hydrolase"/>
    <property type="match status" value="1"/>
</dbReference>
<dbReference type="InterPro" id="IPR029058">
    <property type="entry name" value="AB_hydrolase_fold"/>
</dbReference>
<dbReference type="InterPro" id="IPR008886">
    <property type="entry name" value="UPF0227/Esterase_YqiA"/>
</dbReference>
<dbReference type="NCBIfam" id="NF008291">
    <property type="entry name" value="PRK11071.1"/>
    <property type="match status" value="1"/>
</dbReference>
<dbReference type="PANTHER" id="PTHR35602:SF3">
    <property type="entry name" value="ESTERASE YQIA"/>
    <property type="match status" value="1"/>
</dbReference>
<dbReference type="PANTHER" id="PTHR35602">
    <property type="entry name" value="ESTERASE YQIA-RELATED"/>
    <property type="match status" value="1"/>
</dbReference>
<dbReference type="Pfam" id="PF05728">
    <property type="entry name" value="UPF0227"/>
    <property type="match status" value="1"/>
</dbReference>
<dbReference type="SUPFAM" id="SSF53474">
    <property type="entry name" value="alpha/beta-Hydrolases"/>
    <property type="match status" value="1"/>
</dbReference>
<name>YQIA_SHIFL</name>
<proteinExistence type="inferred from homology"/>
<accession>P0A900</accession>
<accession>P36653</accession>